<reference key="1">
    <citation type="submission" date="2008-05" db="EMBL/GenBank/DDBJ databases">
        <title>Complete sequence of Shigella boydii serotype 18 strain BS512.</title>
        <authorList>
            <person name="Rasko D.A."/>
            <person name="Rosovitz M."/>
            <person name="Maurelli A.T."/>
            <person name="Myers G."/>
            <person name="Seshadri R."/>
            <person name="Cer R."/>
            <person name="Jiang L."/>
            <person name="Ravel J."/>
            <person name="Sebastian Y."/>
        </authorList>
    </citation>
    <scope>NUCLEOTIDE SEQUENCE [LARGE SCALE GENOMIC DNA]</scope>
    <source>
        <strain>CDC 3083-94 / BS512</strain>
    </source>
</reference>
<protein>
    <recommendedName>
        <fullName evidence="1">Hydrogenase maturation factor HybF</fullName>
    </recommendedName>
</protein>
<dbReference type="EMBL" id="CP001063">
    <property type="protein sequence ID" value="ACD06820.1"/>
    <property type="molecule type" value="Genomic_DNA"/>
</dbReference>
<dbReference type="SMR" id="B2U195"/>
<dbReference type="STRING" id="344609.SbBS512_E3418"/>
<dbReference type="KEGG" id="sbc:SbBS512_E3418"/>
<dbReference type="HOGENOM" id="CLU_126929_0_0_6"/>
<dbReference type="Proteomes" id="UP000001030">
    <property type="component" value="Chromosome"/>
</dbReference>
<dbReference type="GO" id="GO:0016151">
    <property type="term" value="F:nickel cation binding"/>
    <property type="evidence" value="ECO:0007669"/>
    <property type="project" value="UniProtKB-UniRule"/>
</dbReference>
<dbReference type="GO" id="GO:0008270">
    <property type="term" value="F:zinc ion binding"/>
    <property type="evidence" value="ECO:0007669"/>
    <property type="project" value="UniProtKB-UniRule"/>
</dbReference>
<dbReference type="GO" id="GO:0051604">
    <property type="term" value="P:protein maturation"/>
    <property type="evidence" value="ECO:0007669"/>
    <property type="project" value="InterPro"/>
</dbReference>
<dbReference type="GO" id="GO:0036211">
    <property type="term" value="P:protein modification process"/>
    <property type="evidence" value="ECO:0007669"/>
    <property type="project" value="UniProtKB-UniRule"/>
</dbReference>
<dbReference type="FunFam" id="3.30.2320.80:FF:000001">
    <property type="entry name" value="Hydrogenase maturation factor HypA"/>
    <property type="match status" value="1"/>
</dbReference>
<dbReference type="Gene3D" id="3.30.2320.80">
    <property type="match status" value="1"/>
</dbReference>
<dbReference type="HAMAP" id="MF_02099">
    <property type="entry name" value="HybF_subfam"/>
    <property type="match status" value="1"/>
</dbReference>
<dbReference type="HAMAP" id="MF_00213">
    <property type="entry name" value="HypA_HybF"/>
    <property type="match status" value="1"/>
</dbReference>
<dbReference type="InterPro" id="IPR039002">
    <property type="entry name" value="HybF"/>
</dbReference>
<dbReference type="InterPro" id="IPR020538">
    <property type="entry name" value="Hydgase_Ni_incorp_HypA/HybF_CS"/>
</dbReference>
<dbReference type="InterPro" id="IPR000688">
    <property type="entry name" value="HypA/HybF"/>
</dbReference>
<dbReference type="NCBIfam" id="TIGR00100">
    <property type="entry name" value="hypA"/>
    <property type="match status" value="1"/>
</dbReference>
<dbReference type="NCBIfam" id="NF002979">
    <property type="entry name" value="PRK03681.1"/>
    <property type="match status" value="1"/>
</dbReference>
<dbReference type="NCBIfam" id="NF009046">
    <property type="entry name" value="PRK12380.1"/>
    <property type="match status" value="1"/>
</dbReference>
<dbReference type="PANTHER" id="PTHR34535:SF4">
    <property type="entry name" value="HYDROGENASE MATURATION FACTOR HYBF"/>
    <property type="match status" value="1"/>
</dbReference>
<dbReference type="PANTHER" id="PTHR34535">
    <property type="entry name" value="HYDROGENASE MATURATION FACTOR HYPA"/>
    <property type="match status" value="1"/>
</dbReference>
<dbReference type="Pfam" id="PF01155">
    <property type="entry name" value="HypA"/>
    <property type="match status" value="1"/>
</dbReference>
<dbReference type="PIRSF" id="PIRSF004761">
    <property type="entry name" value="Hydrgn_mat_HypA"/>
    <property type="match status" value="1"/>
</dbReference>
<dbReference type="PROSITE" id="PS01249">
    <property type="entry name" value="HYPA"/>
    <property type="match status" value="1"/>
</dbReference>
<gene>
    <name evidence="1" type="primary">hybF</name>
    <name type="ordered locus">SbBS512_E3418</name>
</gene>
<organism>
    <name type="scientific">Shigella boydii serotype 18 (strain CDC 3083-94 / BS512)</name>
    <dbReference type="NCBI Taxonomy" id="344609"/>
    <lineage>
        <taxon>Bacteria</taxon>
        <taxon>Pseudomonadati</taxon>
        <taxon>Pseudomonadota</taxon>
        <taxon>Gammaproteobacteria</taxon>
        <taxon>Enterobacterales</taxon>
        <taxon>Enterobacteriaceae</taxon>
        <taxon>Shigella</taxon>
    </lineage>
</organism>
<feature type="chain" id="PRO_1000099898" description="Hydrogenase maturation factor HybF">
    <location>
        <begin position="1"/>
        <end position="113"/>
    </location>
</feature>
<feature type="binding site" evidence="1">
    <location>
        <position position="2"/>
    </location>
    <ligand>
        <name>Ni(2+)</name>
        <dbReference type="ChEBI" id="CHEBI:49786"/>
    </ligand>
</feature>
<feature type="binding site" evidence="1">
    <location>
        <position position="3"/>
    </location>
    <ligand>
        <name>Ni(2+)</name>
        <dbReference type="ChEBI" id="CHEBI:49786"/>
    </ligand>
</feature>
<feature type="binding site" evidence="1">
    <location>
        <position position="73"/>
    </location>
    <ligand>
        <name>Zn(2+)</name>
        <dbReference type="ChEBI" id="CHEBI:29105"/>
    </ligand>
</feature>
<feature type="binding site" evidence="1">
    <location>
        <position position="76"/>
    </location>
    <ligand>
        <name>Zn(2+)</name>
        <dbReference type="ChEBI" id="CHEBI:29105"/>
    </ligand>
</feature>
<feature type="binding site" evidence="1">
    <location>
        <position position="89"/>
    </location>
    <ligand>
        <name>Zn(2+)</name>
        <dbReference type="ChEBI" id="CHEBI:29105"/>
    </ligand>
</feature>
<feature type="binding site" evidence="1">
    <location>
        <position position="92"/>
    </location>
    <ligand>
        <name>Zn(2+)</name>
        <dbReference type="ChEBI" id="CHEBI:29105"/>
    </ligand>
</feature>
<keyword id="KW-0479">Metal-binding</keyword>
<keyword id="KW-0533">Nickel</keyword>
<keyword id="KW-1185">Reference proteome</keyword>
<keyword id="KW-0862">Zinc</keyword>
<proteinExistence type="inferred from homology"/>
<accession>B2U195</accession>
<name>HYBF_SHIB3</name>
<evidence type="ECO:0000255" key="1">
    <source>
        <dbReference type="HAMAP-Rule" id="MF_02099"/>
    </source>
</evidence>
<sequence length="113" mass="12697">MHELSLCQSAVEIIQRQAEQHDVKRVTAVWLEIGALSCVEESAVRFSFEIVCHGTVAQGCDLHIVYKPAQAWCWDCSQVVEIHQHDAQCPLCHGERLRVDTGDSLIVKSIEVE</sequence>
<comment type="function">
    <text evidence="1">Involved in the maturation of [NiFe] hydrogenases. Required for nickel insertion into the metal center of the hydrogenase.</text>
</comment>
<comment type="similarity">
    <text evidence="1">Belongs to the HypA/HybF family. HybF subfamily.</text>
</comment>